<protein>
    <recommendedName>
        <fullName>Zinc metalloproteinase alsophinase</fullName>
        <ecNumber>3.4.24.-</ecNumber>
    </recommendedName>
    <alternativeName>
        <fullName>Snake venom metalloproteinase</fullName>
        <shortName>SVMP</shortName>
    </alternativeName>
</protein>
<feature type="chain" id="PRO_0000417325" description="Zinc metalloproteinase alsophinase">
    <location>
        <begin position="1"/>
        <end position="31" status="greater than"/>
    </location>
</feature>
<feature type="domain" description="Peptidase M12B" evidence="2">
    <location>
        <begin position="9"/>
        <end position="31" status="greater than"/>
    </location>
</feature>
<feature type="binding site" evidence="1">
    <location>
        <position position="12"/>
    </location>
    <ligand>
        <name>Ca(2+)</name>
        <dbReference type="ChEBI" id="CHEBI:29108"/>
    </ligand>
</feature>
<feature type="modified residue" description="Pyrrolidone carboxylic acid" evidence="3">
    <location>
        <position position="1"/>
    </location>
</feature>
<feature type="non-terminal residue">
    <location>
        <position position="31"/>
    </location>
</feature>
<dbReference type="EC" id="3.4.24.-"/>
<dbReference type="GO" id="GO:0005576">
    <property type="term" value="C:extracellular region"/>
    <property type="evidence" value="ECO:0007669"/>
    <property type="project" value="UniProtKB-SubCell"/>
</dbReference>
<dbReference type="GO" id="GO:0046872">
    <property type="term" value="F:metal ion binding"/>
    <property type="evidence" value="ECO:0007669"/>
    <property type="project" value="UniProtKB-KW"/>
</dbReference>
<dbReference type="GO" id="GO:0008237">
    <property type="term" value="F:metallopeptidase activity"/>
    <property type="evidence" value="ECO:0007669"/>
    <property type="project" value="UniProtKB-KW"/>
</dbReference>
<dbReference type="GO" id="GO:0090729">
    <property type="term" value="F:toxin activity"/>
    <property type="evidence" value="ECO:0007669"/>
    <property type="project" value="UniProtKB-KW"/>
</dbReference>
<dbReference type="GO" id="GO:0006508">
    <property type="term" value="P:proteolysis"/>
    <property type="evidence" value="ECO:0007669"/>
    <property type="project" value="UniProtKB-KW"/>
</dbReference>
<reference key="1">
    <citation type="journal article" date="2012" name="Biochimie">
        <title>Alsophinase, a new P-III metalloproteinase with alpha-fibrinogenolytic and hemorrhagic activity from the venom of the rear-fanged puerto rican racer alsophis portoricensis (Serpentes: Dipsadidae).</title>
        <authorList>
            <person name="Weldon C.L."/>
            <person name="Mackessy S.P."/>
        </authorList>
    </citation>
    <scope>PROTEIN SEQUENCE</scope>
    <scope>FUNCTION</scope>
    <scope>ACTIVITY REGULATION</scope>
    <scope>MASS SPECTROMETRY</scope>
    <scope>PYROGLUTAMATE FORMATION AT GLN-1</scope>
    <source>
        <tissue>Venom</tissue>
    </source>
</reference>
<organism>
    <name type="scientific">Borikenophis portoricensis</name>
    <name type="common">Puerto Rican racer</name>
    <name type="synonym">Alsophis portoricensis</name>
    <dbReference type="NCBI Taxonomy" id="1260276"/>
    <lineage>
        <taxon>Eukaryota</taxon>
        <taxon>Metazoa</taxon>
        <taxon>Chordata</taxon>
        <taxon>Craniata</taxon>
        <taxon>Vertebrata</taxon>
        <taxon>Euteleostomi</taxon>
        <taxon>Lepidosauria</taxon>
        <taxon>Squamata</taxon>
        <taxon>Bifurcata</taxon>
        <taxon>Unidentata</taxon>
        <taxon>Episquamata</taxon>
        <taxon>Toxicofera</taxon>
        <taxon>Serpentes</taxon>
        <taxon>Colubroidea</taxon>
        <taxon>Dipsadidae</taxon>
        <taxon>Borikenophis</taxon>
    </lineage>
</organism>
<comment type="function">
    <text evidence="3">Snake venom zinc metalloprotease that has potent hemorrhagic activity, fibrinogenolytic activity on the alpha-subunit of human fibrinogen (FGA) in vitro and provokes necrosis in skin, muscle and lung tissues. May contribute to local edema and ecchymosis induced by venom. Hydrolyzes model substrate (beta-chain of insulin) at Ala(14)-Leu(15).</text>
</comment>
<comment type="cofactor">
    <cofactor evidence="1">
        <name>Zn(2+)</name>
        <dbReference type="ChEBI" id="CHEBI:29105"/>
    </cofactor>
    <text evidence="1">Binds 1 zinc ion per subunit.</text>
</comment>
<comment type="activity regulation">
    <text evidence="3">Inhibited by 1,10-phenanthroline.</text>
</comment>
<comment type="subunit">
    <text evidence="1">Monomer.</text>
</comment>
<comment type="subcellular location">
    <subcellularLocation>
        <location>Secreted</location>
    </subcellularLocation>
</comment>
<comment type="tissue specificity">
    <text>Expressed by the venom gland.</text>
</comment>
<comment type="PTM">
    <text evidence="1">Contains 9 disulfide bonds.</text>
</comment>
<comment type="mass spectrometry"/>
<comment type="similarity">
    <text evidence="4">Belongs to the venom metalloproteinase (M12B) family. P-III subfamily. P-IIIa sub-subfamily.</text>
</comment>
<accession>P0DJH4</accession>
<evidence type="ECO:0000250" key="1"/>
<evidence type="ECO:0000255" key="2">
    <source>
        <dbReference type="PROSITE-ProRule" id="PRU00276"/>
    </source>
</evidence>
<evidence type="ECO:0000269" key="3">
    <source>
    </source>
</evidence>
<evidence type="ECO:0000305" key="4"/>
<name>VM3AL_BORPO</name>
<sequence>QDTYLNAKKYIEFYLVVDNGMFXKYSXXFTV</sequence>
<proteinExistence type="evidence at protein level"/>
<keyword id="KW-0106">Calcium</keyword>
<keyword id="KW-1217">Cell adhesion impairing toxin</keyword>
<keyword id="KW-0903">Direct protein sequencing</keyword>
<keyword id="KW-1015">Disulfide bond</keyword>
<keyword id="KW-1206">Fibrinogenolytic toxin</keyword>
<keyword id="KW-1200">Hemorrhagic toxin</keyword>
<keyword id="KW-1199">Hemostasis impairing toxin</keyword>
<keyword id="KW-0378">Hydrolase</keyword>
<keyword id="KW-0479">Metal-binding</keyword>
<keyword id="KW-0482">Metalloprotease</keyword>
<keyword id="KW-0959">Myotoxin</keyword>
<keyword id="KW-0645">Protease</keyword>
<keyword id="KW-0873">Pyrrolidone carboxylic acid</keyword>
<keyword id="KW-0964">Secreted</keyword>
<keyword id="KW-0800">Toxin</keyword>
<keyword id="KW-0862">Zinc</keyword>